<keyword id="KW-1185">Reference proteome</keyword>
<gene>
    <name type="ordered locus">HQ_2663A</name>
</gene>
<proteinExistence type="inferred from homology"/>
<comment type="similarity">
    <text evidence="1">Belongs to the UPF0212 family.</text>
</comment>
<name>Y2663_HALWD</name>
<accession>Q18GX1</accession>
<organism>
    <name type="scientific">Haloquadratum walsbyi (strain DSM 16790 / HBSQ001)</name>
    <dbReference type="NCBI Taxonomy" id="362976"/>
    <lineage>
        <taxon>Archaea</taxon>
        <taxon>Methanobacteriati</taxon>
        <taxon>Methanobacteriota</taxon>
        <taxon>Stenosarchaea group</taxon>
        <taxon>Halobacteria</taxon>
        <taxon>Halobacteriales</taxon>
        <taxon>Haloferacaceae</taxon>
        <taxon>Haloquadratum</taxon>
    </lineage>
</organism>
<reference key="1">
    <citation type="journal article" date="2006" name="BMC Genomics">
        <title>The genome of the square archaeon Haloquadratum walsbyi: life at the limits of water activity.</title>
        <authorList>
            <person name="Bolhuis H."/>
            <person name="Palm P."/>
            <person name="Wende A."/>
            <person name="Falb M."/>
            <person name="Rampp M."/>
            <person name="Rodriguez-Valera F."/>
            <person name="Pfeiffer F."/>
            <person name="Oesterhelt D."/>
        </authorList>
    </citation>
    <scope>NUCLEOTIDE SEQUENCE [LARGE SCALE GENOMIC DNA]</scope>
    <source>
        <strain>DSM 16790 / HBSQ001</strain>
    </source>
</reference>
<sequence>MTNYLVAMEAAWLVRDVNDIDDAIGVAVSEAGKRLNDRDKEYVEVEVGATPCPACGEPFDSAFIAADTALVGLLLEITVFNADGEKHASRIAKSEVGGALRDVPLSVIDCVETEDDDT</sequence>
<dbReference type="EMBL" id="AM180088">
    <property type="protein sequence ID" value="CAJ52774.1"/>
    <property type="molecule type" value="Genomic_DNA"/>
</dbReference>
<dbReference type="RefSeq" id="WP_011571890.1">
    <property type="nucleotide sequence ID" value="NC_008212.1"/>
</dbReference>
<dbReference type="STRING" id="362976.HQ_2663A"/>
<dbReference type="GeneID" id="4193062"/>
<dbReference type="KEGG" id="hwa:HQ_2663A"/>
<dbReference type="eggNOG" id="arCOG02119">
    <property type="taxonomic scope" value="Archaea"/>
</dbReference>
<dbReference type="HOGENOM" id="CLU_138334_0_0_2"/>
<dbReference type="Proteomes" id="UP000001975">
    <property type="component" value="Chromosome"/>
</dbReference>
<dbReference type="HAMAP" id="MF_01223">
    <property type="entry name" value="UPF0212"/>
    <property type="match status" value="1"/>
</dbReference>
<dbReference type="InterPro" id="IPR007564">
    <property type="entry name" value="UPF0212"/>
</dbReference>
<dbReference type="NCBIfam" id="NF003035">
    <property type="entry name" value="PRK03922.1"/>
    <property type="match status" value="1"/>
</dbReference>
<dbReference type="PANTHER" id="PTHR42199">
    <property type="entry name" value="UPF0212 PROTEIN MJ0068"/>
    <property type="match status" value="1"/>
</dbReference>
<dbReference type="PANTHER" id="PTHR42199:SF1">
    <property type="entry name" value="UPF0212 PROTEIN TK1194"/>
    <property type="match status" value="1"/>
</dbReference>
<dbReference type="Pfam" id="PF04475">
    <property type="entry name" value="DUF555"/>
    <property type="match status" value="1"/>
</dbReference>
<dbReference type="PIRSF" id="PIRSF016934">
    <property type="entry name" value="UCP016934"/>
    <property type="match status" value="1"/>
</dbReference>
<evidence type="ECO:0000255" key="1">
    <source>
        <dbReference type="HAMAP-Rule" id="MF_01223"/>
    </source>
</evidence>
<feature type="chain" id="PRO_1000066784" description="UPF0212 protein HQ_2663A">
    <location>
        <begin position="1"/>
        <end position="118"/>
    </location>
</feature>
<protein>
    <recommendedName>
        <fullName evidence="1">UPF0212 protein HQ_2663A</fullName>
    </recommendedName>
</protein>